<accession>Q0P3N1</accession>
<protein>
    <recommendedName>
        <fullName evidence="1">Photosystem I assembly protein Ycf3</fullName>
    </recommendedName>
</protein>
<dbReference type="EMBL" id="CR954199">
    <property type="protein sequence ID" value="CAL36346.1"/>
    <property type="molecule type" value="Genomic_DNA"/>
</dbReference>
<dbReference type="RefSeq" id="YP_717224.1">
    <property type="nucleotide sequence ID" value="NC_008289.1"/>
</dbReference>
<dbReference type="SMR" id="Q0P3N1"/>
<dbReference type="FunCoup" id="Q0P3N1">
    <property type="interactions" value="11"/>
</dbReference>
<dbReference type="STRING" id="70448.Q0P3N1"/>
<dbReference type="GeneID" id="4238819"/>
<dbReference type="KEGG" id="ota:OstapCp21"/>
<dbReference type="eggNOG" id="KOG1124">
    <property type="taxonomic scope" value="Eukaryota"/>
</dbReference>
<dbReference type="InParanoid" id="Q0P3N1"/>
<dbReference type="Proteomes" id="UP000009170">
    <property type="component" value="Chloroplast"/>
</dbReference>
<dbReference type="GO" id="GO:0009535">
    <property type="term" value="C:chloroplast thylakoid membrane"/>
    <property type="evidence" value="ECO:0007669"/>
    <property type="project" value="UniProtKB-SubCell"/>
</dbReference>
<dbReference type="GO" id="GO:0015979">
    <property type="term" value="P:photosynthesis"/>
    <property type="evidence" value="ECO:0007669"/>
    <property type="project" value="UniProtKB-UniRule"/>
</dbReference>
<dbReference type="Gene3D" id="1.25.40.10">
    <property type="entry name" value="Tetratricopeptide repeat domain"/>
    <property type="match status" value="1"/>
</dbReference>
<dbReference type="HAMAP" id="MF_00439">
    <property type="entry name" value="Ycf3"/>
    <property type="match status" value="1"/>
</dbReference>
<dbReference type="InterPro" id="IPR022818">
    <property type="entry name" value="PSI_Ycf3_assembly"/>
</dbReference>
<dbReference type="InterPro" id="IPR011990">
    <property type="entry name" value="TPR-like_helical_dom_sf"/>
</dbReference>
<dbReference type="InterPro" id="IPR019734">
    <property type="entry name" value="TPR_rpt"/>
</dbReference>
<dbReference type="NCBIfam" id="NF002725">
    <property type="entry name" value="PRK02603.1"/>
    <property type="match status" value="1"/>
</dbReference>
<dbReference type="Pfam" id="PF00515">
    <property type="entry name" value="TPR_1"/>
    <property type="match status" value="1"/>
</dbReference>
<dbReference type="SMART" id="SM00028">
    <property type="entry name" value="TPR"/>
    <property type="match status" value="3"/>
</dbReference>
<dbReference type="SUPFAM" id="SSF48452">
    <property type="entry name" value="TPR-like"/>
    <property type="match status" value="1"/>
</dbReference>
<dbReference type="PROSITE" id="PS50005">
    <property type="entry name" value="TPR"/>
    <property type="match status" value="3"/>
</dbReference>
<dbReference type="PROSITE" id="PS50293">
    <property type="entry name" value="TPR_REGION"/>
    <property type="match status" value="1"/>
</dbReference>
<name>YCF3_OSTTA</name>
<geneLocation type="chloroplast"/>
<comment type="function">
    <text evidence="1">Essential for the assembly of the photosystem I (PSI) complex. May act as a chaperone-like factor to guide the assembly of the PSI subunits.</text>
</comment>
<comment type="subcellular location">
    <subcellularLocation>
        <location evidence="1">Plastid</location>
        <location evidence="1">Chloroplast thylakoid membrane</location>
        <topology evidence="1">Peripheral membrane protein</topology>
    </subcellularLocation>
</comment>
<comment type="similarity">
    <text evidence="1">Belongs to the Ycf3 family.</text>
</comment>
<organism>
    <name type="scientific">Ostreococcus tauri</name>
    <dbReference type="NCBI Taxonomy" id="70448"/>
    <lineage>
        <taxon>Eukaryota</taxon>
        <taxon>Viridiplantae</taxon>
        <taxon>Chlorophyta</taxon>
        <taxon>Mamiellophyceae</taxon>
        <taxon>Mamiellales</taxon>
        <taxon>Bathycoccaceae</taxon>
        <taxon>Ostreococcus</taxon>
    </lineage>
</organism>
<reference key="1">
    <citation type="journal article" date="2007" name="Mol. Biol. Evol.">
        <title>The complete chloroplast and mitochondrial DNA sequence of Ostreococcus tauri: organelle genomes of the smallest eukaryote are examples of compaction.</title>
        <authorList>
            <person name="Robbens S."/>
            <person name="Derelle E."/>
            <person name="Ferraz C."/>
            <person name="Wuyts J."/>
            <person name="Moreau H."/>
            <person name="Van de Peer Y."/>
        </authorList>
    </citation>
    <scope>NUCLEOTIDE SEQUENCE [LARGE SCALE GENOMIC DNA]</scope>
    <source>
        <strain>OTTH0595</strain>
    </source>
</reference>
<proteinExistence type="inferred from homology"/>
<feature type="chain" id="PRO_0000275629" description="Photosystem I assembly protein Ycf3">
    <location>
        <begin position="1"/>
        <end position="166"/>
    </location>
</feature>
<feature type="repeat" description="TPR 1">
    <location>
        <begin position="35"/>
        <end position="68"/>
    </location>
</feature>
<feature type="repeat" description="TPR 2">
    <location>
        <begin position="72"/>
        <end position="105"/>
    </location>
</feature>
<feature type="repeat" description="TPR 3">
    <location>
        <begin position="120"/>
        <end position="153"/>
    </location>
</feature>
<evidence type="ECO:0000255" key="1">
    <source>
        <dbReference type="HAMAP-Rule" id="MF_00439"/>
    </source>
</evidence>
<keyword id="KW-0150">Chloroplast</keyword>
<keyword id="KW-0472">Membrane</keyword>
<keyword id="KW-0602">Photosynthesis</keyword>
<keyword id="KW-0934">Plastid</keyword>
<keyword id="KW-1185">Reference proteome</keyword>
<keyword id="KW-0677">Repeat</keyword>
<keyword id="KW-0793">Thylakoid</keyword>
<keyword id="KW-0802">TPR repeat</keyword>
<sequence>MPRSQKNDNFIDKTFTVVADILLKVLPTTRNEKEAFVYYRDGMSAQAEGEYAEALQNYAQAMRLEVDPYDRSFIFYNIGLIHTSNGEHTKALEYYYQALDRNPSLPQALNNIAVIYHYRGEQALAAGNIPDSETLFEKAAEYWKEAIRLAPLNYSEAQNWLQTTGR</sequence>
<gene>
    <name evidence="1" type="primary">ycf3</name>
    <name type="ordered locus">OtCpg00210</name>
</gene>